<organism>
    <name type="scientific">Francisella tularensis subsp. holarctica (strain FTNF002-00 / FTA)</name>
    <dbReference type="NCBI Taxonomy" id="458234"/>
    <lineage>
        <taxon>Bacteria</taxon>
        <taxon>Pseudomonadati</taxon>
        <taxon>Pseudomonadota</taxon>
        <taxon>Gammaproteobacteria</taxon>
        <taxon>Thiotrichales</taxon>
        <taxon>Francisellaceae</taxon>
        <taxon>Francisella</taxon>
    </lineage>
</organism>
<dbReference type="EC" id="7.1.1.-" evidence="1"/>
<dbReference type="EMBL" id="CP000803">
    <property type="protein sequence ID" value="ABU62403.2"/>
    <property type="molecule type" value="Genomic_DNA"/>
</dbReference>
<dbReference type="RefSeq" id="WP_003017371.1">
    <property type="nucleotide sequence ID" value="NC_009749.1"/>
</dbReference>
<dbReference type="SMR" id="A7NEK0"/>
<dbReference type="KEGG" id="fta:FTA_1928"/>
<dbReference type="HOGENOM" id="CLU_144724_2_0_6"/>
<dbReference type="GO" id="GO:0030964">
    <property type="term" value="C:NADH dehydrogenase complex"/>
    <property type="evidence" value="ECO:0007669"/>
    <property type="project" value="TreeGrafter"/>
</dbReference>
<dbReference type="GO" id="GO:0005886">
    <property type="term" value="C:plasma membrane"/>
    <property type="evidence" value="ECO:0007669"/>
    <property type="project" value="UniProtKB-SubCell"/>
</dbReference>
<dbReference type="GO" id="GO:0050136">
    <property type="term" value="F:NADH:ubiquinone reductase (non-electrogenic) activity"/>
    <property type="evidence" value="ECO:0007669"/>
    <property type="project" value="UniProtKB-UniRule"/>
</dbReference>
<dbReference type="GO" id="GO:0048038">
    <property type="term" value="F:quinone binding"/>
    <property type="evidence" value="ECO:0007669"/>
    <property type="project" value="UniProtKB-KW"/>
</dbReference>
<dbReference type="GO" id="GO:0042773">
    <property type="term" value="P:ATP synthesis coupled electron transport"/>
    <property type="evidence" value="ECO:0007669"/>
    <property type="project" value="InterPro"/>
</dbReference>
<dbReference type="FunFam" id="1.10.287.3510:FF:000001">
    <property type="entry name" value="NADH-quinone oxidoreductase subunit K"/>
    <property type="match status" value="1"/>
</dbReference>
<dbReference type="Gene3D" id="1.10.287.3510">
    <property type="match status" value="1"/>
</dbReference>
<dbReference type="HAMAP" id="MF_01456">
    <property type="entry name" value="NDH1_NuoK"/>
    <property type="match status" value="1"/>
</dbReference>
<dbReference type="InterPro" id="IPR001133">
    <property type="entry name" value="NADH_UbQ_OxRdtase_chain4L/K"/>
</dbReference>
<dbReference type="InterPro" id="IPR039428">
    <property type="entry name" value="NUOK/Mnh_C1-like"/>
</dbReference>
<dbReference type="NCBIfam" id="NF004320">
    <property type="entry name" value="PRK05715.1-2"/>
    <property type="match status" value="1"/>
</dbReference>
<dbReference type="NCBIfam" id="NF004321">
    <property type="entry name" value="PRK05715.1-3"/>
    <property type="match status" value="1"/>
</dbReference>
<dbReference type="NCBIfam" id="NF004323">
    <property type="entry name" value="PRK05715.1-5"/>
    <property type="match status" value="1"/>
</dbReference>
<dbReference type="PANTHER" id="PTHR11434:SF16">
    <property type="entry name" value="NADH-UBIQUINONE OXIDOREDUCTASE CHAIN 4L"/>
    <property type="match status" value="1"/>
</dbReference>
<dbReference type="PANTHER" id="PTHR11434">
    <property type="entry name" value="NADH-UBIQUINONE OXIDOREDUCTASE SUBUNIT ND4L"/>
    <property type="match status" value="1"/>
</dbReference>
<dbReference type="Pfam" id="PF00420">
    <property type="entry name" value="Oxidored_q2"/>
    <property type="match status" value="1"/>
</dbReference>
<name>NUOK_FRATF</name>
<keyword id="KW-0997">Cell inner membrane</keyword>
<keyword id="KW-1003">Cell membrane</keyword>
<keyword id="KW-0472">Membrane</keyword>
<keyword id="KW-0520">NAD</keyword>
<keyword id="KW-0874">Quinone</keyword>
<keyword id="KW-1278">Translocase</keyword>
<keyword id="KW-0812">Transmembrane</keyword>
<keyword id="KW-1133">Transmembrane helix</keyword>
<keyword id="KW-0813">Transport</keyword>
<keyword id="KW-0830">Ubiquinone</keyword>
<proteinExistence type="inferred from homology"/>
<accession>A7NEK0</accession>
<sequence>MRALKMNSISVSVTHGLIFSILLFVISVAGIIINRRNILILLMSIELMLLAVNTNFLIFANMHQQAMGGVFVFFIMAVAAAETAIGLAIVVAIFRKRKTIDLSKLNTLRG</sequence>
<reference key="1">
    <citation type="journal article" date="2009" name="PLoS ONE">
        <title>Complete genome sequence of Francisella tularensis subspecies holarctica FTNF002-00.</title>
        <authorList>
            <person name="Barabote R.D."/>
            <person name="Xie G."/>
            <person name="Brettin T.S."/>
            <person name="Hinrichs S.H."/>
            <person name="Fey P.D."/>
            <person name="Jay J.J."/>
            <person name="Engle J.L."/>
            <person name="Godbole S.D."/>
            <person name="Noronha J.M."/>
            <person name="Scheuermann R.H."/>
            <person name="Zhou L.W."/>
            <person name="Lion C."/>
            <person name="Dempsey M.P."/>
        </authorList>
    </citation>
    <scope>NUCLEOTIDE SEQUENCE [LARGE SCALE GENOMIC DNA]</scope>
    <source>
        <strain>FTNF002-00 / FTA</strain>
    </source>
</reference>
<comment type="function">
    <text evidence="1">NDH-1 shuttles electrons from NADH, via FMN and iron-sulfur (Fe-S) centers, to quinones in the respiratory chain. The immediate electron acceptor for the enzyme in this species is believed to be ubiquinone. Couples the redox reaction to proton translocation (for every two electrons transferred, four hydrogen ions are translocated across the cytoplasmic membrane), and thus conserves the redox energy in a proton gradient.</text>
</comment>
<comment type="catalytic activity">
    <reaction evidence="1">
        <text>a quinone + NADH + 5 H(+)(in) = a quinol + NAD(+) + 4 H(+)(out)</text>
        <dbReference type="Rhea" id="RHEA:57888"/>
        <dbReference type="ChEBI" id="CHEBI:15378"/>
        <dbReference type="ChEBI" id="CHEBI:24646"/>
        <dbReference type="ChEBI" id="CHEBI:57540"/>
        <dbReference type="ChEBI" id="CHEBI:57945"/>
        <dbReference type="ChEBI" id="CHEBI:132124"/>
    </reaction>
</comment>
<comment type="subunit">
    <text evidence="1">NDH-1 is composed of 14 different subunits. Subunits NuoA, H, J, K, L, M, N constitute the membrane sector of the complex.</text>
</comment>
<comment type="subcellular location">
    <subcellularLocation>
        <location evidence="1">Cell inner membrane</location>
        <topology evidence="1">Multi-pass membrane protein</topology>
    </subcellularLocation>
</comment>
<comment type="similarity">
    <text evidence="1">Belongs to the complex I subunit 4L family.</text>
</comment>
<protein>
    <recommendedName>
        <fullName evidence="1">NADH-quinone oxidoreductase subunit K</fullName>
        <ecNumber evidence="1">7.1.1.-</ecNumber>
    </recommendedName>
    <alternativeName>
        <fullName evidence="1">NADH dehydrogenase I subunit K</fullName>
    </alternativeName>
    <alternativeName>
        <fullName evidence="1">NDH-1 subunit K</fullName>
    </alternativeName>
</protein>
<feature type="chain" id="PRO_0000390064" description="NADH-quinone oxidoreductase subunit K">
    <location>
        <begin position="1"/>
        <end position="110"/>
    </location>
</feature>
<feature type="transmembrane region" description="Helical" evidence="1">
    <location>
        <begin position="13"/>
        <end position="33"/>
    </location>
</feature>
<feature type="transmembrane region" description="Helical" evidence="1">
    <location>
        <begin position="38"/>
        <end position="58"/>
    </location>
</feature>
<feature type="transmembrane region" description="Helical" evidence="1">
    <location>
        <begin position="70"/>
        <end position="90"/>
    </location>
</feature>
<gene>
    <name evidence="1" type="primary">nuoK</name>
    <name type="ordered locus">FTA_1928</name>
</gene>
<evidence type="ECO:0000255" key="1">
    <source>
        <dbReference type="HAMAP-Rule" id="MF_01456"/>
    </source>
</evidence>